<organism>
    <name type="scientific">Human immunodeficiency virus type 1 group M subtype H (isolate VI991)</name>
    <name type="common">HIV-1</name>
    <dbReference type="NCBI Taxonomy" id="388888"/>
    <lineage>
        <taxon>Viruses</taxon>
        <taxon>Riboviria</taxon>
        <taxon>Pararnavirae</taxon>
        <taxon>Artverviricota</taxon>
        <taxon>Revtraviricetes</taxon>
        <taxon>Ortervirales</taxon>
        <taxon>Retroviridae</taxon>
        <taxon>Orthoretrovirinae</taxon>
        <taxon>Lentivirus</taxon>
        <taxon>Human immunodeficiency virus type 1</taxon>
    </lineage>
</organism>
<gene>
    <name type="primary">gag</name>
</gene>
<protein>
    <recommendedName>
        <fullName>Gag polyprotein</fullName>
    </recommendedName>
    <alternativeName>
        <fullName>Pr55Gag</fullName>
    </alternativeName>
    <component>
        <recommendedName>
            <fullName>Matrix protein p17</fullName>
            <shortName>MA</shortName>
        </recommendedName>
    </component>
    <component>
        <recommendedName>
            <fullName>Capsid protein p24</fullName>
            <shortName>CA</shortName>
        </recommendedName>
    </component>
    <component>
        <recommendedName>
            <fullName evidence="6">Spacer peptide 1</fullName>
            <shortName>SP1</shortName>
        </recommendedName>
        <alternativeName>
            <fullName>p2</fullName>
        </alternativeName>
    </component>
    <component>
        <recommendedName>
            <fullName>Nucleocapsid protein p7</fullName>
            <shortName>NC</shortName>
        </recommendedName>
    </component>
    <component>
        <recommendedName>
            <fullName evidence="6">Spacer peptide 2</fullName>
            <shortName>SP2</shortName>
        </recommendedName>
        <alternativeName>
            <fullName>p1</fullName>
        </alternativeName>
    </component>
    <component>
        <recommendedName>
            <fullName>p6-gag</fullName>
        </recommendedName>
    </component>
</protein>
<dbReference type="EMBL" id="AF190127">
    <property type="protein sequence ID" value="AAF18393.1"/>
    <property type="molecule type" value="Genomic_DNA"/>
</dbReference>
<dbReference type="SMR" id="Q9Q721"/>
<dbReference type="PRO" id="PR:Q9Q721"/>
<dbReference type="Proteomes" id="UP000150531">
    <property type="component" value="Segment"/>
</dbReference>
<dbReference type="GO" id="GO:0042025">
    <property type="term" value="C:host cell nucleus"/>
    <property type="evidence" value="ECO:0007669"/>
    <property type="project" value="UniProtKB-SubCell"/>
</dbReference>
<dbReference type="GO" id="GO:0020002">
    <property type="term" value="C:host cell plasma membrane"/>
    <property type="evidence" value="ECO:0007669"/>
    <property type="project" value="UniProtKB-SubCell"/>
</dbReference>
<dbReference type="GO" id="GO:0072494">
    <property type="term" value="C:host multivesicular body"/>
    <property type="evidence" value="ECO:0007669"/>
    <property type="project" value="UniProtKB-SubCell"/>
</dbReference>
<dbReference type="GO" id="GO:0016020">
    <property type="term" value="C:membrane"/>
    <property type="evidence" value="ECO:0007669"/>
    <property type="project" value="UniProtKB-KW"/>
</dbReference>
<dbReference type="GO" id="GO:0019013">
    <property type="term" value="C:viral nucleocapsid"/>
    <property type="evidence" value="ECO:0007669"/>
    <property type="project" value="UniProtKB-KW"/>
</dbReference>
<dbReference type="GO" id="GO:0055036">
    <property type="term" value="C:virion membrane"/>
    <property type="evidence" value="ECO:0007669"/>
    <property type="project" value="UniProtKB-SubCell"/>
</dbReference>
<dbReference type="GO" id="GO:0003723">
    <property type="term" value="F:RNA binding"/>
    <property type="evidence" value="ECO:0007669"/>
    <property type="project" value="UniProtKB-KW"/>
</dbReference>
<dbReference type="GO" id="GO:0005198">
    <property type="term" value="F:structural molecule activity"/>
    <property type="evidence" value="ECO:0007669"/>
    <property type="project" value="InterPro"/>
</dbReference>
<dbReference type="GO" id="GO:0008270">
    <property type="term" value="F:zinc ion binding"/>
    <property type="evidence" value="ECO:0007669"/>
    <property type="project" value="UniProtKB-KW"/>
</dbReference>
<dbReference type="GO" id="GO:0039702">
    <property type="term" value="P:viral budding via host ESCRT complex"/>
    <property type="evidence" value="ECO:0007669"/>
    <property type="project" value="UniProtKB-KW"/>
</dbReference>
<dbReference type="GO" id="GO:0075523">
    <property type="term" value="P:viral translational frameshifting"/>
    <property type="evidence" value="ECO:0007669"/>
    <property type="project" value="UniProtKB-KW"/>
</dbReference>
<dbReference type="FunFam" id="1.10.375.10:FF:000001">
    <property type="entry name" value="Gag polyprotein"/>
    <property type="match status" value="1"/>
</dbReference>
<dbReference type="Gene3D" id="1.10.1200.30">
    <property type="match status" value="1"/>
</dbReference>
<dbReference type="Gene3D" id="6.10.250.390">
    <property type="match status" value="1"/>
</dbReference>
<dbReference type="Gene3D" id="1.10.375.10">
    <property type="entry name" value="Human Immunodeficiency Virus Type 1 Capsid Protein"/>
    <property type="match status" value="1"/>
</dbReference>
<dbReference type="Gene3D" id="1.10.150.90">
    <property type="entry name" value="Immunodeficiency lentiviruses, gag gene matrix protein p17"/>
    <property type="match status" value="1"/>
</dbReference>
<dbReference type="Gene3D" id="1.20.5.760">
    <property type="entry name" value="Single helix bin"/>
    <property type="match status" value="1"/>
</dbReference>
<dbReference type="Gene3D" id="4.10.60.10">
    <property type="entry name" value="Zinc finger, CCHC-type"/>
    <property type="match status" value="1"/>
</dbReference>
<dbReference type="InterPro" id="IPR045345">
    <property type="entry name" value="Gag_p24_C"/>
</dbReference>
<dbReference type="InterPro" id="IPR014817">
    <property type="entry name" value="Gag_p6"/>
</dbReference>
<dbReference type="InterPro" id="IPR000071">
    <property type="entry name" value="Lentvrl_matrix_N"/>
</dbReference>
<dbReference type="InterPro" id="IPR012344">
    <property type="entry name" value="Matrix_HIV/RSV_N"/>
</dbReference>
<dbReference type="InterPro" id="IPR050195">
    <property type="entry name" value="Primate_lentivir_Gag_pol-like"/>
</dbReference>
<dbReference type="InterPro" id="IPR008916">
    <property type="entry name" value="Retrov_capsid_C"/>
</dbReference>
<dbReference type="InterPro" id="IPR008919">
    <property type="entry name" value="Retrov_capsid_N"/>
</dbReference>
<dbReference type="InterPro" id="IPR010999">
    <property type="entry name" value="Retrovr_matrix"/>
</dbReference>
<dbReference type="InterPro" id="IPR001878">
    <property type="entry name" value="Znf_CCHC"/>
</dbReference>
<dbReference type="InterPro" id="IPR036875">
    <property type="entry name" value="Znf_CCHC_sf"/>
</dbReference>
<dbReference type="PANTHER" id="PTHR40389:SF4">
    <property type="match status" value="1"/>
</dbReference>
<dbReference type="PANTHER" id="PTHR40389">
    <property type="entry name" value="ENDOGENOUS RETROVIRUS GROUP K MEMBER 24 GAG POLYPROTEIN-RELATED"/>
    <property type="match status" value="1"/>
</dbReference>
<dbReference type="Pfam" id="PF00540">
    <property type="entry name" value="Gag_p17"/>
    <property type="match status" value="1"/>
</dbReference>
<dbReference type="Pfam" id="PF00607">
    <property type="entry name" value="Gag_p24"/>
    <property type="match status" value="1"/>
</dbReference>
<dbReference type="Pfam" id="PF19317">
    <property type="entry name" value="Gag_p24_C"/>
    <property type="match status" value="1"/>
</dbReference>
<dbReference type="Pfam" id="PF08705">
    <property type="entry name" value="Gag_p6"/>
    <property type="match status" value="1"/>
</dbReference>
<dbReference type="Pfam" id="PF00098">
    <property type="entry name" value="zf-CCHC"/>
    <property type="match status" value="2"/>
</dbReference>
<dbReference type="PRINTS" id="PR00234">
    <property type="entry name" value="HIV1MATRIX"/>
</dbReference>
<dbReference type="SMART" id="SM00343">
    <property type="entry name" value="ZnF_C2HC"/>
    <property type="match status" value="2"/>
</dbReference>
<dbReference type="SUPFAM" id="SSF47836">
    <property type="entry name" value="Retroviral matrix proteins"/>
    <property type="match status" value="1"/>
</dbReference>
<dbReference type="SUPFAM" id="SSF47353">
    <property type="entry name" value="Retrovirus capsid dimerization domain-like"/>
    <property type="match status" value="1"/>
</dbReference>
<dbReference type="SUPFAM" id="SSF47943">
    <property type="entry name" value="Retrovirus capsid protein, N-terminal core domain"/>
    <property type="match status" value="1"/>
</dbReference>
<dbReference type="SUPFAM" id="SSF57756">
    <property type="entry name" value="Retrovirus zinc finger-like domains"/>
    <property type="match status" value="1"/>
</dbReference>
<dbReference type="PROSITE" id="PS50158">
    <property type="entry name" value="ZF_CCHC"/>
    <property type="match status" value="2"/>
</dbReference>
<name>GAG_HV1V9</name>
<evidence type="ECO:0000250" key="1"/>
<evidence type="ECO:0000250" key="2">
    <source>
        <dbReference type="UniProtKB" id="P03347"/>
    </source>
</evidence>
<evidence type="ECO:0000250" key="3">
    <source>
        <dbReference type="UniProtKB" id="P03348"/>
    </source>
</evidence>
<evidence type="ECO:0000250" key="4">
    <source>
        <dbReference type="UniProtKB" id="P03349"/>
    </source>
</evidence>
<evidence type="ECO:0000250" key="5">
    <source>
        <dbReference type="UniProtKB" id="P04591"/>
    </source>
</evidence>
<evidence type="ECO:0000250" key="6">
    <source>
        <dbReference type="UniProtKB" id="P12493"/>
    </source>
</evidence>
<evidence type="ECO:0000250" key="7">
    <source>
        <dbReference type="UniProtKB" id="P12497"/>
    </source>
</evidence>
<evidence type="ECO:0000255" key="8">
    <source>
        <dbReference type="PROSITE-ProRule" id="PRU00047"/>
    </source>
</evidence>
<evidence type="ECO:0000256" key="9">
    <source>
        <dbReference type="SAM" id="MobiDB-lite"/>
    </source>
</evidence>
<evidence type="ECO:0000305" key="10"/>
<sequence>MGARASVLSGGKLDAWEKIRLRPGGRKKYRLKHLVWASRELERFALNPDLLETADGCQQILGQLQPALKTGTEDLQSLYNTIAVLYCVHQRIDVKDTKEALGKIEEIQNKNKQRTQQAPAAADKEKDSKISQNYPIVQNAQGQMVHQAISPRTLNAWVKVVEEKAFSPEVIPMFSALSEGATPQDLNAMLNTVGGHQAAMQMLKDTINEEAAEWDRLHPVHAGPIPPGQMREPRGSDIAGTTSTLQEQVAWMTGNPPIPVGDIYKRWIILGLNKIVRMYSPVSILDIKQGPKEPFRDYVDRFFRVLRAEQATQDVKNWMTDTLLVQNANPDCRTILKALGRGASIEEMMTACQGVGGPSHKARVLAEAMSQVTNASAAIMMQKGNFKGPRRTVKCSNCGKEGHIARNCRAPRKKGCWKCGQEGHQMKDCTGRQANFLGKIWPSSKGRPGNFPQKRLEPTAPPAESFGFGEEITPSPRQELKEQEPPLTSLRSLFGNDQ</sequence>
<proteinExistence type="inferred from homology"/>
<accession>Q9Q721</accession>
<comment type="function">
    <molecule>Gag polyprotein</molecule>
    <text evidence="5">Mediates, with Gag-Pol polyprotein, the essential events in virion assembly, including binding the plasma membrane, making the protein-protein interactions necessary to create spherical particles, recruiting the viral Env proteins, and packaging the genomic RNA via direct interactions with the RNA packaging sequence (Psi).</text>
</comment>
<comment type="function">
    <molecule>Matrix protein p17</molecule>
    <text evidence="1 6">Targets the polyprotein to the plasma membrane via a multipartite membrane-binding signal, that includes its myristoylated N-terminus (By similarity). Matrix protein is part of the pre-integration complex. Implicated in the release from host cell mediated by Vpu. Binds to RNA (By similarity).</text>
</comment>
<comment type="function">
    <molecule>Capsid protein p24</molecule>
    <text evidence="5 6">Forms the conical core that encapsulates the genomic RNA-nucleocapsid complex in the virion. Most core are conical, with only 7% tubular. The core is constituted by capsid protein hexamer subunits. The core is disassembled soon after virion entry (By similarity). The capsid promotes immune invasion by cloaking viral DNA from CGAS detection (By similarity). Host restriction factors such as TRIM5-alpha or TRIMCyp bind retroviral capsids and cause premature capsid disassembly, leading to blocks in reverse transcription. Capsid restriction by TRIM5 is one of the factors which restricts HIV-1 to the human species. Host PIN1 apparently facilitates the virion uncoating (By similarity). On the other hand, interactions with PDZD8 or CYPA stabilize the capsid (By similarity).</text>
</comment>
<comment type="function">
    <molecule>Nucleocapsid protein p7</molecule>
    <text evidence="5">Encapsulates and protects viral dimeric unspliced genomic RNA (gRNA). Binds these RNAs through its zinc fingers. Acts as a nucleic acid chaperone which is involved in rearangement of nucleic acid secondary structure during gRNA retrotranscription. Also facilitates template switch leading to recombination. As part of the polyprotein, participates in gRNA dimerization, packaging, tRNA incorporation and virion assembly.</text>
</comment>
<comment type="function">
    <molecule>p6-gag</molecule>
    <text evidence="6">Plays a role in budding of the assembled particle by interacting with the host class E VPS proteins TSG101 and PDCD6IP/AIP1.</text>
</comment>
<comment type="subunit">
    <molecule>Gag polyprotein</molecule>
    <text evidence="4 5">Homotrimer; further assembles as hexamers of trimers. Oligomerization possibly creates a central hole into which the cytoplasmic tail of the gp41 envelope protein may be inserted. Interacts with host TRIM22; this interaction seems to disrupt proper trafficking of Gag polyprotein and may interfere with budding. Interacts with host PDZD8. When ubiquitinated, interacts (via p6-gag domain) with host PACSIN2; this interaction allows PACSIN2 recruitment to viral assembly sites and its subsequent incorporation into virions. Interacts with MOV10 (By similarity).</text>
</comment>
<comment type="subunit">
    <molecule>Matrix protein p17</molecule>
    <text evidence="5 6">Homotrimer; further assembles as hexamers of trimers. Interacts with gp41 (via C-terminus). Interacts with host CALM1; this interaction induces a conformational change in the Matrix protein, triggering exposure of the myristate group. Interacts with host AP3D1; this interaction allows the polyprotein trafficking to multivesicular bodies during virus assembly. Part of the pre-integration complex (PIC) which is composed of viral genome, matrix protein, Vpr and integrase.</text>
</comment>
<comment type="subunit">
    <molecule>Capsid protein p24</molecule>
    <text evidence="5 6">Homodimer; the homodimer further multimerizes as homohexamers or homopentamers (By similarity). Interacts with host NUP98 (By similarity). Interacts with host PPIA/CYPA; this interaction stabilizes the capsid (By similarity). Interacts with host NUP153 (By similarity). Interacts with host PDZD8; this interaction stabilizes the capsid. Interacts with host TRIM5; this interaction destabilizes the capsid (By similarity). Interacts with host CPSF6 (By similarity). Interacts with host NONO; the interaction is weak (By similarity).</text>
</comment>
<comment type="subunit">
    <molecule>Nucleocapsid protein p7</molecule>
    <text evidence="6">Interacts with host NUP98.</text>
</comment>
<comment type="subunit">
    <molecule>p6-gag</molecule>
    <text evidence="3 6">Interacts with Vpr; this interaction allows Vpr incorporation into the virion. Interacts with host TSG101. p6-gag interacts with host PDCD6IP/AIP1.</text>
</comment>
<comment type="subcellular location">
    <molecule>Gag polyprotein</molecule>
    <subcellularLocation>
        <location evidence="6">Host cell membrane</location>
        <topology evidence="6">Lipid-anchor</topology>
    </subcellularLocation>
    <subcellularLocation>
        <location evidence="6">Host endosome</location>
        <location evidence="6">Host multivesicular body</location>
    </subcellularLocation>
    <text evidence="6">These locations are probably linked to virus assembly sites. The main location is the cell membrane, but under some circumstances, late endosomal compartments can serve as productive sites for virion assembly.</text>
</comment>
<comment type="subcellular location">
    <molecule>Matrix protein p17</molecule>
    <subcellularLocation>
        <location evidence="6">Virion membrane</location>
        <topology evidence="6">Lipid-anchor</topology>
    </subcellularLocation>
    <subcellularLocation>
        <location evidence="1">Host nucleus</location>
    </subcellularLocation>
    <subcellularLocation>
        <location evidence="1">Host cytoplasm</location>
    </subcellularLocation>
</comment>
<comment type="subcellular location">
    <molecule>Capsid protein p24</molecule>
    <subcellularLocation>
        <location evidence="6">Virion</location>
    </subcellularLocation>
</comment>
<comment type="subcellular location">
    <molecule>Nucleocapsid protein p7</molecule>
    <subcellularLocation>
        <location evidence="6">Virion</location>
    </subcellularLocation>
</comment>
<comment type="alternative products">
    <event type="ribosomal frameshifting"/>
    <isoform>
        <id>Q9Q721-1</id>
        <name>Gag polyprotein</name>
        <sequence type="displayed"/>
    </isoform>
    <isoform>
        <id>Q9Q720-1</id>
        <name>Gag-Pol polyprotein</name>
        <sequence type="external"/>
    </isoform>
    <text>Translation results in the formation of the Gag polyprotein most of the time. Ribosomal frameshifting at the gag-pol genes boundary occurs at low frequency and produces the Gag-Pol polyprotein. This strategy of translation probably allows the virus to modulate the quantity of each viral protein. Maintenance of a correct Gag to Gag-Pol ratio is essential for RNA dimerization and viral infectivity.</text>
</comment>
<comment type="domain">
    <text evidence="6">Late-budding domains (L domains) are short sequence motifs essential for viral particle budding. They recruit proteins of the host ESCRT machinery (Endosomal Sorting Complex Required for Transport) or ESCRT-associated proteins. p6-gag contains two L domains: a PTAP/PSAP motif, which interacts with the UEV domain of TSG101 and a LYPX(n)L motif which interacts with PDCD6IP/AIP1.</text>
</comment>
<comment type="PTM">
    <text evidence="6">Gag-Pol polyprotein: Specific enzymatic cleavages by the viral protease yield mature proteins.</text>
</comment>
<comment type="PTM">
    <molecule>Matrix protein p17</molecule>
    <text evidence="5">Tyrosine phosphorylated presumably in the virion by a host kinase. Phosphorylation is apparently not a major regulator of membrane association.</text>
</comment>
<comment type="PTM">
    <text evidence="6">Capsid protein p24 is phosphorylated possibly by host MAPK1; this phosphorylation is necessary for Pin1-mediated virion uncoating.</text>
</comment>
<comment type="PTM">
    <text evidence="2">Nucleocapsid protein p7 is methylated by host PRMT6, impairing its function by reducing RNA annealing and the initiation of reverse transcription.</text>
</comment>
<comment type="miscellaneous">
    <text>HIV-1 lineages are divided in three main groups, M (for Major), O (for Outlier), and N (for New, or Non-M, Non-O). The vast majority of strains found worldwide belong to the group M. Group O seems to be endemic to and largely confined to Cameroon and neighboring countries in West Central Africa, where these viruses represent a small minority of HIV-1 strains. The group N is represented by a limited number of isolates from Cameroonian persons. The group M is further subdivided in 9 clades or subtypes (A to D, F to H, J and K).</text>
</comment>
<comment type="miscellaneous">
    <molecule>Isoform Gag polyprotein</molecule>
    <text>Produced by conventional translation.</text>
</comment>
<comment type="similarity">
    <text evidence="10">Belongs to the primate lentivirus group gag polyprotein family.</text>
</comment>
<keyword id="KW-0014">AIDS</keyword>
<keyword id="KW-0167">Capsid protein</keyword>
<keyword id="KW-1032">Host cell membrane</keyword>
<keyword id="KW-1035">Host cytoplasm</keyword>
<keyword id="KW-1039">Host endosome</keyword>
<keyword id="KW-1043">Host membrane</keyword>
<keyword id="KW-1048">Host nucleus</keyword>
<keyword id="KW-0945">Host-virus interaction</keyword>
<keyword id="KW-0449">Lipoprotein</keyword>
<keyword id="KW-0472">Membrane</keyword>
<keyword id="KW-0479">Metal-binding</keyword>
<keyword id="KW-0488">Methylation</keyword>
<keyword id="KW-0519">Myristate</keyword>
<keyword id="KW-0597">Phosphoprotein</keyword>
<keyword id="KW-0677">Repeat</keyword>
<keyword id="KW-0688">Ribosomal frameshifting</keyword>
<keyword id="KW-0694">RNA-binding</keyword>
<keyword id="KW-1198">Viral budding</keyword>
<keyword id="KW-1187">Viral budding via the host ESCRT complexes</keyword>
<keyword id="KW-0543">Viral nucleoprotein</keyword>
<keyword id="KW-1188">Viral release from host cell</keyword>
<keyword id="KW-0946">Virion</keyword>
<keyword id="KW-0862">Zinc</keyword>
<keyword id="KW-0863">Zinc-finger</keyword>
<reference key="1">
    <citation type="journal article" date="2000" name="AIDS">
        <title>HIV-1 subtype H near-full length genome reference strains and analysis of subtype-H-containing inter-subtype recombinants.</title>
        <authorList>
            <person name="Janssens W."/>
            <person name="Laukkanen T."/>
            <person name="Salminen M.O."/>
            <person name="Carr J.K."/>
            <person name="Van der Auwera G."/>
            <person name="Heyndrickx L."/>
            <person name="van der Groen G."/>
            <person name="McCutchan F.E."/>
        </authorList>
    </citation>
    <scope>NUCLEOTIDE SEQUENCE [GENOMIC DNA]</scope>
</reference>
<feature type="initiator methionine" description="Removed; by host" evidence="1">
    <location>
        <position position="1"/>
    </location>
</feature>
<feature type="chain" id="PRO_0000261234" description="Gag polyprotein">
    <location>
        <begin position="2"/>
        <end position="498"/>
    </location>
</feature>
<feature type="chain" id="PRO_0000246416" description="Matrix protein p17" evidence="1">
    <location>
        <begin position="2"/>
        <end position="134"/>
    </location>
</feature>
<feature type="chain" id="PRO_0000246417" description="Capsid protein p24" evidence="1">
    <location>
        <begin position="135"/>
        <end position="365"/>
    </location>
</feature>
<feature type="peptide" id="PRO_0000246418" description="Spacer peptide 1" evidence="1">
    <location>
        <begin position="366"/>
        <end position="380"/>
    </location>
</feature>
<feature type="chain" id="PRO_0000246419" description="Nucleocapsid protein p7" evidence="1">
    <location>
        <begin position="381"/>
        <end position="435"/>
    </location>
</feature>
<feature type="peptide" id="PRO_0000246420" description="Spacer peptide 2" evidence="1">
    <location>
        <begin position="436"/>
        <end position="451"/>
    </location>
</feature>
<feature type="chain" id="PRO_0000246421" description="p6-gag" evidence="1">
    <location>
        <begin position="452"/>
        <end position="498"/>
    </location>
</feature>
<feature type="zinc finger region" description="CCHC-type 1" evidence="8">
    <location>
        <begin position="393"/>
        <end position="410"/>
    </location>
</feature>
<feature type="zinc finger region" description="CCHC-type 2" evidence="8">
    <location>
        <begin position="414"/>
        <end position="431"/>
    </location>
</feature>
<feature type="region of interest" description="Interaction with Gp41" evidence="6">
    <location>
        <begin position="7"/>
        <end position="31"/>
    </location>
</feature>
<feature type="region of interest" description="Interaction with host CALM1" evidence="5">
    <location>
        <begin position="8"/>
        <end position="43"/>
    </location>
</feature>
<feature type="region of interest" description="Interaction with host AP3D1" evidence="7">
    <location>
        <begin position="12"/>
        <end position="19"/>
    </location>
</feature>
<feature type="region of interest" description="Interaction with membrane phosphatidylinositol 4,5-bisphosphate and RNA" evidence="6">
    <location>
        <begin position="14"/>
        <end position="33"/>
    </location>
</feature>
<feature type="region of interest" description="Interaction with membrane phosphatidylinositol 4,5-bisphosphate" evidence="6">
    <location>
        <begin position="73"/>
        <end position="77"/>
    </location>
</feature>
<feature type="region of interest" description="Disordered" evidence="9">
    <location>
        <begin position="110"/>
        <end position="129"/>
    </location>
</feature>
<feature type="region of interest" description="Interaction with host PPIA/CYPA and NUP153" evidence="6">
    <location>
        <begin position="191"/>
        <end position="229"/>
    </location>
</feature>
<feature type="region of interest" description="PPIA/CYPA-binding loop" evidence="5">
    <location>
        <begin position="219"/>
        <end position="227"/>
    </location>
</feature>
<feature type="region of interest" description="Dimerization/Multimerization of capsid protein p24" evidence="5">
    <location>
        <begin position="279"/>
        <end position="365"/>
    </location>
</feature>
<feature type="region of interest" description="Disordered" evidence="9">
    <location>
        <begin position="442"/>
        <end position="498"/>
    </location>
</feature>
<feature type="short sequence motif" description="Nuclear export signal" evidence="1">
    <location>
        <begin position="16"/>
        <end position="22"/>
    </location>
</feature>
<feature type="short sequence motif" description="Nuclear localization signal" evidence="1">
    <location>
        <begin position="26"/>
        <end position="32"/>
    </location>
</feature>
<feature type="short sequence motif" description="PTAP/PSAP motif">
    <location>
        <begin position="458"/>
        <end position="461"/>
    </location>
</feature>
<feature type="compositionally biased region" description="Polar residues" evidence="9">
    <location>
        <begin position="489"/>
        <end position="498"/>
    </location>
</feature>
<feature type="site" description="Cleavage; by viral protease" evidence="1">
    <location>
        <begin position="134"/>
        <end position="135"/>
    </location>
</feature>
<feature type="site" description="Cleavage; by viral protease" evidence="1">
    <location>
        <begin position="365"/>
        <end position="366"/>
    </location>
</feature>
<feature type="site" description="Cleavage; by viral protease" evidence="1">
    <location>
        <begin position="380"/>
        <end position="381"/>
    </location>
</feature>
<feature type="site" description="Cleavage; by viral protease" evidence="1">
    <location>
        <begin position="435"/>
        <end position="436"/>
    </location>
</feature>
<feature type="site" description="Cleavage; by viral protease" evidence="1">
    <location>
        <begin position="451"/>
        <end position="452"/>
    </location>
</feature>
<feature type="modified residue" description="Phosphoserine; by host MAPK1" evidence="6">
    <location>
        <position position="150"/>
    </location>
</feature>
<feature type="modified residue" description="Asymmetric dimethylarginine; in Nucleocapsid protein p7; by host PRMT6" evidence="1">
    <location>
        <position position="390"/>
    </location>
</feature>
<feature type="modified residue" description="Asymmetric dimethylarginine; in Nucleocapsid protein p7; by host PRMT6" evidence="1">
    <location>
        <position position="412"/>
    </location>
</feature>
<feature type="lipid moiety-binding region" description="N-myristoyl glycine; by host" evidence="1">
    <location>
        <position position="2"/>
    </location>
</feature>
<organismHost>
    <name type="scientific">Homo sapiens</name>
    <name type="common">Human</name>
    <dbReference type="NCBI Taxonomy" id="9606"/>
</organismHost>